<name>RK16_WHEAT</name>
<feature type="chain" id="PRO_0000062319" description="Large ribosomal subunit protein uL16c">
    <location>
        <begin position="1"/>
        <end position="136"/>
    </location>
</feature>
<feature type="region of interest" description="Disordered" evidence="2">
    <location>
        <begin position="1"/>
        <end position="20"/>
    </location>
</feature>
<evidence type="ECO:0000255" key="1">
    <source>
        <dbReference type="HAMAP-Rule" id="MF_01342"/>
    </source>
</evidence>
<evidence type="ECO:0000256" key="2">
    <source>
        <dbReference type="SAM" id="MobiDB-lite"/>
    </source>
</evidence>
<evidence type="ECO:0000305" key="3"/>
<geneLocation type="chloroplast"/>
<comment type="subunit">
    <text evidence="1">Part of the 50S ribosomal subunit.</text>
</comment>
<comment type="subcellular location">
    <subcellularLocation>
        <location>Plastid</location>
        <location>Chloroplast</location>
    </subcellularLocation>
</comment>
<comment type="similarity">
    <text evidence="1">Belongs to the universal ribosomal protein uL16 family.</text>
</comment>
<proteinExistence type="inferred from homology"/>
<accession>Q95H50</accession>
<organism>
    <name type="scientific">Triticum aestivum</name>
    <name type="common">Wheat</name>
    <dbReference type="NCBI Taxonomy" id="4565"/>
    <lineage>
        <taxon>Eukaryota</taxon>
        <taxon>Viridiplantae</taxon>
        <taxon>Streptophyta</taxon>
        <taxon>Embryophyta</taxon>
        <taxon>Tracheophyta</taxon>
        <taxon>Spermatophyta</taxon>
        <taxon>Magnoliopsida</taxon>
        <taxon>Liliopsida</taxon>
        <taxon>Poales</taxon>
        <taxon>Poaceae</taxon>
        <taxon>BOP clade</taxon>
        <taxon>Pooideae</taxon>
        <taxon>Triticodae</taxon>
        <taxon>Triticeae</taxon>
        <taxon>Triticinae</taxon>
        <taxon>Triticum</taxon>
    </lineage>
</organism>
<gene>
    <name evidence="1" type="primary">rpl16</name>
</gene>
<dbReference type="EMBL" id="AB042240">
    <property type="protein sequence ID" value="BAB47071.1"/>
    <property type="molecule type" value="Genomic_DNA"/>
</dbReference>
<dbReference type="RefSeq" id="NP_114295.1">
    <property type="nucleotide sequence ID" value="NC_002762.1"/>
</dbReference>
<dbReference type="SMR" id="Q95H50"/>
<dbReference type="STRING" id="4565.Q95H50"/>
<dbReference type="PaxDb" id="4565-EPlTAEP00000010050"/>
<dbReference type="GeneID" id="803195"/>
<dbReference type="KEGG" id="taes:803195"/>
<dbReference type="eggNOG" id="KOG3422">
    <property type="taxonomic scope" value="Eukaryota"/>
</dbReference>
<dbReference type="Proteomes" id="UP000019116">
    <property type="component" value="Chloroplast"/>
</dbReference>
<dbReference type="GO" id="GO:0009507">
    <property type="term" value="C:chloroplast"/>
    <property type="evidence" value="ECO:0007669"/>
    <property type="project" value="UniProtKB-SubCell"/>
</dbReference>
<dbReference type="GO" id="GO:0005762">
    <property type="term" value="C:mitochondrial large ribosomal subunit"/>
    <property type="evidence" value="ECO:0000318"/>
    <property type="project" value="GO_Central"/>
</dbReference>
<dbReference type="GO" id="GO:0019843">
    <property type="term" value="F:rRNA binding"/>
    <property type="evidence" value="ECO:0000318"/>
    <property type="project" value="GO_Central"/>
</dbReference>
<dbReference type="GO" id="GO:0003735">
    <property type="term" value="F:structural constituent of ribosome"/>
    <property type="evidence" value="ECO:0000318"/>
    <property type="project" value="GO_Central"/>
</dbReference>
<dbReference type="GO" id="GO:0032543">
    <property type="term" value="P:mitochondrial translation"/>
    <property type="evidence" value="ECO:0000318"/>
    <property type="project" value="GO_Central"/>
</dbReference>
<dbReference type="CDD" id="cd01433">
    <property type="entry name" value="Ribosomal_L16_L10e"/>
    <property type="match status" value="1"/>
</dbReference>
<dbReference type="FunFam" id="3.90.1170.10:FF:000001">
    <property type="entry name" value="50S ribosomal protein L16"/>
    <property type="match status" value="1"/>
</dbReference>
<dbReference type="Gene3D" id="3.90.1170.10">
    <property type="entry name" value="Ribosomal protein L10e/L16"/>
    <property type="match status" value="1"/>
</dbReference>
<dbReference type="HAMAP" id="MF_01342">
    <property type="entry name" value="Ribosomal_uL16"/>
    <property type="match status" value="1"/>
</dbReference>
<dbReference type="InterPro" id="IPR047873">
    <property type="entry name" value="Ribosomal_uL16"/>
</dbReference>
<dbReference type="InterPro" id="IPR000114">
    <property type="entry name" value="Ribosomal_uL16_bact-type"/>
</dbReference>
<dbReference type="InterPro" id="IPR020798">
    <property type="entry name" value="Ribosomal_uL16_CS"/>
</dbReference>
<dbReference type="InterPro" id="IPR016180">
    <property type="entry name" value="Ribosomal_uL16_dom"/>
</dbReference>
<dbReference type="InterPro" id="IPR036920">
    <property type="entry name" value="Ribosomal_uL16_sf"/>
</dbReference>
<dbReference type="NCBIfam" id="TIGR01164">
    <property type="entry name" value="rplP_bact"/>
    <property type="match status" value="1"/>
</dbReference>
<dbReference type="PANTHER" id="PTHR12220">
    <property type="entry name" value="50S/60S RIBOSOMAL PROTEIN L16"/>
    <property type="match status" value="1"/>
</dbReference>
<dbReference type="PANTHER" id="PTHR12220:SF13">
    <property type="entry name" value="LARGE RIBOSOMAL SUBUNIT PROTEIN UL16M"/>
    <property type="match status" value="1"/>
</dbReference>
<dbReference type="Pfam" id="PF00252">
    <property type="entry name" value="Ribosomal_L16"/>
    <property type="match status" value="1"/>
</dbReference>
<dbReference type="PRINTS" id="PR00060">
    <property type="entry name" value="RIBOSOMALL16"/>
</dbReference>
<dbReference type="SUPFAM" id="SSF54686">
    <property type="entry name" value="Ribosomal protein L16p/L10e"/>
    <property type="match status" value="1"/>
</dbReference>
<dbReference type="PROSITE" id="PS00586">
    <property type="entry name" value="RIBOSOMAL_L16_1"/>
    <property type="match status" value="1"/>
</dbReference>
<dbReference type="PROSITE" id="PS00701">
    <property type="entry name" value="RIBOSOMAL_L16_2"/>
    <property type="match status" value="1"/>
</dbReference>
<sequence>MLSPKRTRFRKQHRGRMKGKSCRGNRICFGRYALQALEPAWITARQIEAGRRAITRYARRGGKIWVRIFPDKPVTLRPTETRMGSGKGSPEYWVSVVKPGRILYEMGGVSETVARAAISIAASKMPIRSQFIRLEI</sequence>
<protein>
    <recommendedName>
        <fullName evidence="1">Large ribosomal subunit protein uL16c</fullName>
    </recommendedName>
    <alternativeName>
        <fullName evidence="3">50S ribosomal protein L16, chloroplastic</fullName>
    </alternativeName>
</protein>
<keyword id="KW-0150">Chloroplast</keyword>
<keyword id="KW-0934">Plastid</keyword>
<keyword id="KW-1185">Reference proteome</keyword>
<keyword id="KW-0687">Ribonucleoprotein</keyword>
<keyword id="KW-0689">Ribosomal protein</keyword>
<reference key="1">
    <citation type="journal article" date="2000" name="Plant Mol. Biol. Rep.">
        <title>Chinese spring wheat (Triticum aestivum L.) chloroplast genome: complete sequence and contig clones.</title>
        <authorList>
            <person name="Ogihara Y."/>
            <person name="Isono K."/>
            <person name="Kojima T."/>
            <person name="Endo A."/>
            <person name="Hanaoka M."/>
            <person name="Shiina T."/>
            <person name="Terachi T."/>
            <person name="Utsugi S."/>
            <person name="Murata M."/>
            <person name="Mori N."/>
            <person name="Takumi S."/>
            <person name="Ikeo K."/>
            <person name="Gojobori T."/>
            <person name="Murai R."/>
            <person name="Murai K."/>
            <person name="Matsuoka Y."/>
            <person name="Ohnishi Y."/>
            <person name="Tajiri H."/>
            <person name="Tsunewaki K."/>
        </authorList>
    </citation>
    <scope>NUCLEOTIDE SEQUENCE [LARGE SCALE GENOMIC DNA]</scope>
    <source>
        <strain>cv. Chinese Spring</strain>
    </source>
</reference>